<dbReference type="EMBL" id="DQ149972">
    <property type="protein sequence ID" value="AAZ78213.1"/>
    <property type="molecule type" value="mRNA"/>
</dbReference>
<dbReference type="EMBL" id="DQ303878">
    <property type="protein sequence ID" value="ABC17625.2"/>
    <property type="molecule type" value="mRNA"/>
</dbReference>
<dbReference type="RefSeq" id="NP_001041495.2">
    <property type="nucleotide sequence ID" value="NM_001048030.3"/>
</dbReference>
<dbReference type="SMR" id="Q2PT31"/>
<dbReference type="FunCoup" id="Q2PT31">
    <property type="interactions" value="11"/>
</dbReference>
<dbReference type="STRING" id="9615.ENSCAFP00000021988"/>
<dbReference type="GlyCosmos" id="Q2PT31">
    <property type="glycosylation" value="1 site, No reported glycans"/>
</dbReference>
<dbReference type="PaxDb" id="9612-ENSCAFP00000021988"/>
<dbReference type="Ensembl" id="ENSCAFT00000023685.5">
    <property type="protein sequence ID" value="ENSCAFP00000021988.3"/>
    <property type="gene ID" value="ENSCAFG00000014924.5"/>
</dbReference>
<dbReference type="Ensembl" id="ENSCAFT00030001544.1">
    <property type="protein sequence ID" value="ENSCAFP00030001370.1"/>
    <property type="gene ID" value="ENSCAFG00030000902.1"/>
</dbReference>
<dbReference type="Ensembl" id="ENSCAFT00845001747.1">
    <property type="protein sequence ID" value="ENSCAFP00845001380.1"/>
    <property type="gene ID" value="ENSCAFG00845001014.1"/>
</dbReference>
<dbReference type="GeneID" id="490344"/>
<dbReference type="KEGG" id="cfa:490344"/>
<dbReference type="CTD" id="4653"/>
<dbReference type="VEuPathDB" id="HostDB:ENSCAFG00845001014"/>
<dbReference type="VGNC" id="VGNC:43576">
    <property type="gene designation" value="MYOC"/>
</dbReference>
<dbReference type="eggNOG" id="KOG3545">
    <property type="taxonomic scope" value="Eukaryota"/>
</dbReference>
<dbReference type="GeneTree" id="ENSGT00940000158561"/>
<dbReference type="HOGENOM" id="CLU_035236_4_0_1"/>
<dbReference type="InParanoid" id="Q2PT31"/>
<dbReference type="OMA" id="REVSKWN"/>
<dbReference type="OrthoDB" id="8626508at2759"/>
<dbReference type="TreeFam" id="TF315964"/>
<dbReference type="Proteomes" id="UP000002254">
    <property type="component" value="Chromosome 7"/>
</dbReference>
<dbReference type="Proteomes" id="UP000694429">
    <property type="component" value="Chromosome 7"/>
</dbReference>
<dbReference type="Proteomes" id="UP000694542">
    <property type="component" value="Unplaced"/>
</dbReference>
<dbReference type="Proteomes" id="UP000805418">
    <property type="component" value="Chromosome 7"/>
</dbReference>
<dbReference type="Bgee" id="ENSCAFG00000014924">
    <property type="expression patterns" value="Expressed in cartilage tissue and 37 other cell types or tissues"/>
</dbReference>
<dbReference type="GO" id="GO:0005929">
    <property type="term" value="C:cilium"/>
    <property type="evidence" value="ECO:0007669"/>
    <property type="project" value="UniProtKB-SubCell"/>
</dbReference>
<dbReference type="GO" id="GO:0062023">
    <property type="term" value="C:collagen-containing extracellular matrix"/>
    <property type="evidence" value="ECO:0000250"/>
    <property type="project" value="UniProtKB"/>
</dbReference>
<dbReference type="GO" id="GO:0031410">
    <property type="term" value="C:cytoplasmic vesicle"/>
    <property type="evidence" value="ECO:0000250"/>
    <property type="project" value="UniProtKB"/>
</dbReference>
<dbReference type="GO" id="GO:0005783">
    <property type="term" value="C:endoplasmic reticulum"/>
    <property type="evidence" value="ECO:0000250"/>
    <property type="project" value="UniProtKB"/>
</dbReference>
<dbReference type="GO" id="GO:0070062">
    <property type="term" value="C:extracellular exosome"/>
    <property type="evidence" value="ECO:0000250"/>
    <property type="project" value="UniProtKB"/>
</dbReference>
<dbReference type="GO" id="GO:0005615">
    <property type="term" value="C:extracellular space"/>
    <property type="evidence" value="ECO:0000318"/>
    <property type="project" value="GO_Central"/>
</dbReference>
<dbReference type="GO" id="GO:0005794">
    <property type="term" value="C:Golgi apparatus"/>
    <property type="evidence" value="ECO:0000250"/>
    <property type="project" value="UniProtKB"/>
</dbReference>
<dbReference type="GO" id="GO:0005743">
    <property type="term" value="C:mitochondrial inner membrane"/>
    <property type="evidence" value="ECO:0000250"/>
    <property type="project" value="UniProtKB"/>
</dbReference>
<dbReference type="GO" id="GO:0005758">
    <property type="term" value="C:mitochondrial intermembrane space"/>
    <property type="evidence" value="ECO:0000250"/>
    <property type="project" value="UniProtKB"/>
</dbReference>
<dbReference type="GO" id="GO:0005741">
    <property type="term" value="C:mitochondrial outer membrane"/>
    <property type="evidence" value="ECO:0000250"/>
    <property type="project" value="UniProtKB"/>
</dbReference>
<dbReference type="GO" id="GO:0033268">
    <property type="term" value="C:node of Ranvier"/>
    <property type="evidence" value="ECO:0000250"/>
    <property type="project" value="UniProtKB"/>
</dbReference>
<dbReference type="GO" id="GO:0005791">
    <property type="term" value="C:rough endoplasmic reticulum"/>
    <property type="evidence" value="ECO:0007669"/>
    <property type="project" value="UniProtKB-SubCell"/>
</dbReference>
<dbReference type="GO" id="GO:0001968">
    <property type="term" value="F:fibronectin binding"/>
    <property type="evidence" value="ECO:0007669"/>
    <property type="project" value="Ensembl"/>
</dbReference>
<dbReference type="GO" id="GO:0005109">
    <property type="term" value="F:frizzled binding"/>
    <property type="evidence" value="ECO:0007669"/>
    <property type="project" value="Ensembl"/>
</dbReference>
<dbReference type="GO" id="GO:0046872">
    <property type="term" value="F:metal ion binding"/>
    <property type="evidence" value="ECO:0007669"/>
    <property type="project" value="UniProtKB-KW"/>
</dbReference>
<dbReference type="GO" id="GO:0032027">
    <property type="term" value="F:myosin light chain binding"/>
    <property type="evidence" value="ECO:0007669"/>
    <property type="project" value="Ensembl"/>
</dbReference>
<dbReference type="GO" id="GO:0030971">
    <property type="term" value="F:receptor tyrosine kinase binding"/>
    <property type="evidence" value="ECO:0007669"/>
    <property type="project" value="Ensembl"/>
</dbReference>
<dbReference type="GO" id="GO:0060348">
    <property type="term" value="P:bone development"/>
    <property type="evidence" value="ECO:0000250"/>
    <property type="project" value="UniProtKB"/>
</dbReference>
<dbReference type="GO" id="GO:0045162">
    <property type="term" value="P:clustering of voltage-gated sodium channels"/>
    <property type="evidence" value="ECO:0000250"/>
    <property type="project" value="UniProtKB"/>
</dbReference>
<dbReference type="GO" id="GO:0038133">
    <property type="term" value="P:ERBB2-ERBB3 signaling pathway"/>
    <property type="evidence" value="ECO:0000250"/>
    <property type="project" value="UniProtKB"/>
</dbReference>
<dbReference type="GO" id="GO:0022011">
    <property type="term" value="P:myelination in peripheral nervous system"/>
    <property type="evidence" value="ECO:0000250"/>
    <property type="project" value="UniProtKB"/>
</dbReference>
<dbReference type="GO" id="GO:0001953">
    <property type="term" value="P:negative regulation of cell-matrix adhesion"/>
    <property type="evidence" value="ECO:0000250"/>
    <property type="project" value="UniProtKB"/>
</dbReference>
<dbReference type="GO" id="GO:0035024">
    <property type="term" value="P:negative regulation of Rho protein signal transduction"/>
    <property type="evidence" value="ECO:0000250"/>
    <property type="project" value="UniProtKB"/>
</dbReference>
<dbReference type="GO" id="GO:0051497">
    <property type="term" value="P:negative regulation of stress fiber assembly"/>
    <property type="evidence" value="ECO:0000250"/>
    <property type="project" value="UniProtKB"/>
</dbReference>
<dbReference type="GO" id="GO:0031175">
    <property type="term" value="P:neuron projection development"/>
    <property type="evidence" value="ECO:0000250"/>
    <property type="project" value="UniProtKB"/>
</dbReference>
<dbReference type="GO" id="GO:0035567">
    <property type="term" value="P:non-canonical Wnt signaling pathway"/>
    <property type="evidence" value="ECO:0000250"/>
    <property type="project" value="UniProtKB"/>
</dbReference>
<dbReference type="GO" id="GO:0001649">
    <property type="term" value="P:osteoblast differentiation"/>
    <property type="evidence" value="ECO:0000250"/>
    <property type="project" value="UniProtKB"/>
</dbReference>
<dbReference type="GO" id="GO:0030335">
    <property type="term" value="P:positive regulation of cell migration"/>
    <property type="evidence" value="ECO:0000250"/>
    <property type="project" value="UniProtKB"/>
</dbReference>
<dbReference type="GO" id="GO:0051894">
    <property type="term" value="P:positive regulation of focal adhesion assembly"/>
    <property type="evidence" value="ECO:0000250"/>
    <property type="project" value="UniProtKB"/>
</dbReference>
<dbReference type="GO" id="GO:0046330">
    <property type="term" value="P:positive regulation of JNK cascade"/>
    <property type="evidence" value="ECO:0007669"/>
    <property type="project" value="Ensembl"/>
</dbReference>
<dbReference type="GO" id="GO:0051901">
    <property type="term" value="P:positive regulation of mitochondrial depolarization"/>
    <property type="evidence" value="ECO:0000250"/>
    <property type="project" value="UniProtKB"/>
</dbReference>
<dbReference type="GO" id="GO:0051897">
    <property type="term" value="P:positive regulation of phosphatidylinositol 3-kinase/protein kinase B signal transduction"/>
    <property type="evidence" value="ECO:0000250"/>
    <property type="project" value="UniProtKB"/>
</dbReference>
<dbReference type="GO" id="GO:0051496">
    <property type="term" value="P:positive regulation of stress fiber assembly"/>
    <property type="evidence" value="ECO:0000250"/>
    <property type="project" value="UniProtKB"/>
</dbReference>
<dbReference type="GO" id="GO:1900026">
    <property type="term" value="P:positive regulation of substrate adhesion-dependent cell spreading"/>
    <property type="evidence" value="ECO:0000250"/>
    <property type="project" value="UniProtKB"/>
</dbReference>
<dbReference type="GO" id="GO:0043408">
    <property type="term" value="P:regulation of MAPK cascade"/>
    <property type="evidence" value="ECO:0000250"/>
    <property type="project" value="UniProtKB"/>
</dbReference>
<dbReference type="GO" id="GO:0007165">
    <property type="term" value="P:signal transduction"/>
    <property type="evidence" value="ECO:0000318"/>
    <property type="project" value="GO_Central"/>
</dbReference>
<dbReference type="GO" id="GO:0014734">
    <property type="term" value="P:skeletal muscle hypertrophy"/>
    <property type="evidence" value="ECO:0000250"/>
    <property type="project" value="UniProtKB"/>
</dbReference>
<dbReference type="Gene3D" id="1.10.287.1490">
    <property type="match status" value="1"/>
</dbReference>
<dbReference type="InterPro" id="IPR003112">
    <property type="entry name" value="Olfac-like_dom"/>
</dbReference>
<dbReference type="InterPro" id="IPR050605">
    <property type="entry name" value="Olfactomedin-like_domain"/>
</dbReference>
<dbReference type="PANTHER" id="PTHR23192:SF33">
    <property type="entry name" value="MYOCILIN"/>
    <property type="match status" value="1"/>
</dbReference>
<dbReference type="PANTHER" id="PTHR23192">
    <property type="entry name" value="OLFACTOMEDIN-RELATED"/>
    <property type="match status" value="1"/>
</dbReference>
<dbReference type="Pfam" id="PF02191">
    <property type="entry name" value="OLF"/>
    <property type="match status" value="1"/>
</dbReference>
<dbReference type="SMART" id="SM00284">
    <property type="entry name" value="OLF"/>
    <property type="match status" value="1"/>
</dbReference>
<dbReference type="PROSITE" id="PS51132">
    <property type="entry name" value="OLF"/>
    <property type="match status" value="1"/>
</dbReference>
<proteinExistence type="evidence at protein level"/>
<gene>
    <name type="primary">MYOC</name>
</gene>
<comment type="function">
    <text evidence="2 3">Secreted glycoprotein regulating the activation of different signaling pathways in adjacent cells to control different processes including cell adhesion, cell-matrix adhesion, cytoskeleton organization and cell migration. Promotes substrate adhesion, spreading and formation of focal contacts. Negatively regulates cell-matrix adhesion and stress fiber assembly through Rho protein signal transduction. Modulates the organization of actin cytoskeleton by stimulating the formation of stress fibers through interactions with components of Wnt signaling pathways. Promotes cell migration through activation of PTK2 and the downstream phosphatidylinositol 3-kinase signaling. Plays a role in bone formation and promotes osteoblast differentiation in a dose-dependent manner through mitogen-activated protein kinase signaling. Mediates myelination in the peripheral nervous system through ERBB2/ERBB3 signaling. Plays a role as a regulator of muscle hypertrophy through the components of dystrophin-associated protein complex. Involved in positive regulation of mitochondrial depolarization. Plays a role in neurite outgrowth. May participate in the obstruction of fluid outflow in the trabecular meshwork.</text>
</comment>
<comment type="subunit">
    <text evidence="2 3">Homodimer (via N-terminus). Can also form higher oligomers. Interacts with OLFM3, FN1, NRCAM, GLDN and NFASC. Interacts (via N-terminus) with MYL2. Interacts with SFRP1, FRZB, FZD7, FZD10, FZD1 and WIF1; regulates Wnt signaling (By similarity). Interacts with SNTA1; regulates muscle hypertrophy. Interacts with ERBB2 and ERBB3; activates ERBB2-ERBB3 signaling pathway. Interacts with SNCG; affects its secretion and its aggregation (By similarity).</text>
</comment>
<comment type="subcellular location">
    <subcellularLocation>
        <location evidence="3">Secreted</location>
    </subcellularLocation>
    <subcellularLocation>
        <location evidence="3">Golgi apparatus</location>
    </subcellularLocation>
    <subcellularLocation>
        <location evidence="3">Cytoplasmic vesicle</location>
    </subcellularLocation>
    <subcellularLocation>
        <location evidence="3">Secreted</location>
        <location evidence="3">Extracellular space</location>
    </subcellularLocation>
    <subcellularLocation>
        <location evidence="3">Secreted</location>
        <location evidence="3">Extracellular space</location>
        <location evidence="3">Extracellular matrix</location>
    </subcellularLocation>
    <subcellularLocation>
        <location evidence="3">Secreted</location>
        <location evidence="3">Extracellular exosome</location>
    </subcellularLocation>
    <subcellularLocation>
        <location evidence="3">Mitochondrion</location>
    </subcellularLocation>
    <subcellularLocation>
        <location evidence="3">Mitochondrion intermembrane space</location>
    </subcellularLocation>
    <subcellularLocation>
        <location evidence="3">Mitochondrion inner membrane</location>
    </subcellularLocation>
    <subcellularLocation>
        <location evidence="3">Mitochondrion outer membrane</location>
    </subcellularLocation>
    <subcellularLocation>
        <location evidence="3">Rough endoplasmic reticulum</location>
    </subcellularLocation>
    <subcellularLocation>
        <location evidence="3">Cell projection</location>
    </subcellularLocation>
    <subcellularLocation>
        <location evidence="3">Cell projection</location>
        <location evidence="3">Cilium</location>
    </subcellularLocation>
    <text evidence="3">Located preferentially in the ciliary rootlet and basal body of the connecting cilium of photoreceptor cells, and in the rough endoplasmic reticulum. It is only imported to mitochondria in the trabecular meshwork. Localizes to the Golgi apparatus in Schlemm's canal endothelial cells. Appears in the extracellular space of trabecular meshwork cells by an unconventional mechanism, likely associated with exosome-like vesicles. Localizes in trabecular meshwork extracellular matrix.</text>
</comment>
<comment type="subcellular location">
    <molecule>Myocilin, C-terminal fragment</molecule>
    <subcellularLocation>
        <location evidence="1">Secreted</location>
    </subcellularLocation>
</comment>
<comment type="subcellular location">
    <molecule>Myocilin, N-terminal fragment</molecule>
    <subcellularLocation>
        <location>Endoplasmic reticulum</location>
    </subcellularLocation>
    <text evidence="1">Remains retained in the endoplasmic reticulum.</text>
</comment>
<comment type="tissue specificity">
    <text evidence="7">Expressed in optic nerve head, ciliary body and retina.</text>
</comment>
<comment type="PTM">
    <text evidence="7">N-glycosylated.</text>
</comment>
<comment type="PTM">
    <text evidence="7">Palmitoylated.</text>
</comment>
<comment type="PTM">
    <text evidence="1">Undergoes a calcium-dependent proteolytic cleavage at Arg-205 by CAPN2 in the endoplasmic reticulum. The result is the production of two fragments, one of 35 kDa containing the C-terminal olfactomedin-like domain, and another of 20 kDa containing the N-terminal leucine zipper-like domain (By similarity).</text>
</comment>
<organism>
    <name type="scientific">Canis lupus familiaris</name>
    <name type="common">Dog</name>
    <name type="synonym">Canis familiaris</name>
    <dbReference type="NCBI Taxonomy" id="9615"/>
    <lineage>
        <taxon>Eukaryota</taxon>
        <taxon>Metazoa</taxon>
        <taxon>Chordata</taxon>
        <taxon>Craniata</taxon>
        <taxon>Vertebrata</taxon>
        <taxon>Euteleostomi</taxon>
        <taxon>Mammalia</taxon>
        <taxon>Eutheria</taxon>
        <taxon>Laurasiatheria</taxon>
        <taxon>Carnivora</taxon>
        <taxon>Caniformia</taxon>
        <taxon>Canidae</taxon>
        <taxon>Canis</taxon>
    </lineage>
</organism>
<evidence type="ECO:0000250" key="1"/>
<evidence type="ECO:0000250" key="2">
    <source>
        <dbReference type="UniProtKB" id="O70624"/>
    </source>
</evidence>
<evidence type="ECO:0000250" key="3">
    <source>
        <dbReference type="UniProtKB" id="Q99972"/>
    </source>
</evidence>
<evidence type="ECO:0000255" key="4"/>
<evidence type="ECO:0000255" key="5">
    <source>
        <dbReference type="PROSITE-ProRule" id="PRU00446"/>
    </source>
</evidence>
<evidence type="ECO:0000256" key="6">
    <source>
        <dbReference type="SAM" id="MobiDB-lite"/>
    </source>
</evidence>
<evidence type="ECO:0000269" key="7">
    <source>
    </source>
</evidence>
<protein>
    <recommendedName>
        <fullName>Myocilin</fullName>
    </recommendedName>
    <component>
        <recommendedName>
            <fullName>Myocilin, N-terminal fragment</fullName>
        </recommendedName>
        <alternativeName>
            <fullName>Myocilin 20 kDa N-terminal fragment</fullName>
        </alternativeName>
    </component>
    <component>
        <recommendedName>
            <fullName>Myocilin, C-terminal fragment</fullName>
        </recommendedName>
        <alternativeName>
            <fullName>Myocilin 35 kDa N-terminal fragment</fullName>
        </alternativeName>
    </component>
</protein>
<reference key="1">
    <citation type="journal article" date="2006" name="Mol. Vis.">
        <title>Canine myocilin is associated with lipid modified by palmitic acid.</title>
        <authorList>
            <person name="Ricard C.S."/>
            <person name="Mukherjee A."/>
            <person name="Silver F.-L."/>
            <person name="Wagenknecht P.L."/>
        </authorList>
    </citation>
    <scope>NUCLEOTIDE SEQUENCE [MRNA]</scope>
    <scope>TISSUE SPECIFICITY</scope>
    <scope>GLYCOSYLATION</scope>
    <scope>PALMITOYLATION</scope>
    <source>
        <strain>Beagle</strain>
        <tissue>Trabecular meshwork</tissue>
    </source>
</reference>
<reference key="2">
    <citation type="journal article" date="2007" name="Vet. Ophthalmol.">
        <title>Cloning of canine myocilin cDNA and molecular analysis of the myocilin gene in Shiba Inu dogs.</title>
        <authorList>
            <person name="Kato K."/>
            <person name="Sasaki N."/>
            <person name="Matsunaga S."/>
            <person name="Nishimura R."/>
            <person name="Ogawa H."/>
        </authorList>
    </citation>
    <scope>NUCLEOTIDE SEQUENCE [MRNA]</scope>
    <source>
        <strain>Beagle</strain>
        <tissue>Trabecular meshwork</tissue>
    </source>
</reference>
<name>MYOC_CANLF</name>
<sequence>MPTAQLLLLACLLWGLEARTAQLRKANDRSGRCQYIFSVASPNESSCPEQGQAMSAIQDLQRDLESTKARLSSLEGLLHQLTLGQAAGPSESQEGLHRELGTLRKEREQLETQARELEVAYSNLLRDKSALEEEKRRLGEENEDLAQRLEHSSQEVARLRRGQCPQAHSSSQDVPAGSREVSKWNVETVNFQELKSELTEVPASRILKESPSGHPRNEEGDSGCGELVWVGEPLTLRTAETITGKYGVWMRDPKPTYPHTRETTWRIDTVGTDIRQVFEYELASQFLQGYPSKVHVLPRPLESTGAVVYRGSLYFQGAGSGTVVRYELTAETVKAEREIPGAGYHGQFPYSWGGYTDIDLAVDETGLWVIYSTQEAKGAIVLSKLNPETLELEQTWETNIRKQSVANAFVICGHLYTISSYSSPDATVNFAYDTGTGRSRVLSIPFKNRYKYSSMIDYNPLEKKLFAWDNFNMVTYDIRLSKM</sequence>
<accession>Q2PT31</accession>
<accession>Q3Y9M0</accession>
<feature type="signal peptide" evidence="4">
    <location>
        <begin position="1"/>
        <end position="18"/>
    </location>
</feature>
<feature type="chain" id="PRO_0000232718" description="Myocilin">
    <location>
        <begin position="19"/>
        <end position="483"/>
    </location>
</feature>
<feature type="chain" id="PRO_0000428737" description="Myocilin, N-terminal fragment" evidence="1">
    <location>
        <begin position="19"/>
        <end position="205"/>
    </location>
</feature>
<feature type="chain" id="PRO_0000428738" description="Myocilin, C-terminal fragment" evidence="1">
    <location>
        <begin position="206"/>
        <end position="483"/>
    </location>
</feature>
<feature type="domain" description="Olfactomedin-like" evidence="5">
    <location>
        <begin position="223"/>
        <end position="482"/>
    </location>
</feature>
<feature type="region of interest" description="Disordered" evidence="6">
    <location>
        <begin position="153"/>
        <end position="179"/>
    </location>
</feature>
<feature type="coiled-coil region" evidence="4">
    <location>
        <begin position="51"/>
        <end position="162"/>
    </location>
</feature>
<feature type="short sequence motif" description="Microbody targeting signal" evidence="4">
    <location>
        <begin position="481"/>
        <end position="483"/>
    </location>
</feature>
<feature type="binding site" evidence="3">
    <location>
        <position position="359"/>
    </location>
    <ligand>
        <name>Ca(2+)</name>
        <dbReference type="ChEBI" id="CHEBI:29108"/>
    </ligand>
</feature>
<feature type="binding site" evidence="3">
    <location>
        <position position="407"/>
    </location>
    <ligand>
        <name>Ca(2+)</name>
        <dbReference type="ChEBI" id="CHEBI:29108"/>
    </ligand>
</feature>
<feature type="binding site" evidence="3">
    <location>
        <position position="408"/>
    </location>
    <ligand>
        <name>Ca(2+)</name>
        <dbReference type="ChEBI" id="CHEBI:29108"/>
    </ligand>
</feature>
<feature type="binding site" evidence="3">
    <location>
        <position position="456"/>
    </location>
    <ligand>
        <name>Ca(2+)</name>
        <dbReference type="ChEBI" id="CHEBI:29108"/>
    </ligand>
</feature>
<feature type="binding site" evidence="3">
    <location>
        <position position="457"/>
    </location>
    <ligand>
        <name>Ca(2+)</name>
        <dbReference type="ChEBI" id="CHEBI:29108"/>
    </ligand>
</feature>
<feature type="site" description="Cleavage; by CAPN2" evidence="1">
    <location>
        <begin position="205"/>
        <end position="206"/>
    </location>
</feature>
<feature type="glycosylation site" description="N-linked (GlcNAc...) asparagine" evidence="4">
    <location>
        <position position="43"/>
    </location>
</feature>
<feature type="disulfide bond" evidence="3 5">
    <location>
        <begin position="224"/>
        <end position="412"/>
    </location>
</feature>
<keyword id="KW-0106">Calcium</keyword>
<keyword id="KW-0966">Cell projection</keyword>
<keyword id="KW-0969">Cilium</keyword>
<keyword id="KW-0175">Coiled coil</keyword>
<keyword id="KW-0968">Cytoplasmic vesicle</keyword>
<keyword id="KW-1015">Disulfide bond</keyword>
<keyword id="KW-0256">Endoplasmic reticulum</keyword>
<keyword id="KW-0272">Extracellular matrix</keyword>
<keyword id="KW-0325">Glycoprotein</keyword>
<keyword id="KW-0333">Golgi apparatus</keyword>
<keyword id="KW-0449">Lipoprotein</keyword>
<keyword id="KW-0472">Membrane</keyword>
<keyword id="KW-0479">Metal-binding</keyword>
<keyword id="KW-0496">Mitochondrion</keyword>
<keyword id="KW-0999">Mitochondrion inner membrane</keyword>
<keyword id="KW-1000">Mitochondrion outer membrane</keyword>
<keyword id="KW-0564">Palmitate</keyword>
<keyword id="KW-1185">Reference proteome</keyword>
<keyword id="KW-0964">Secreted</keyword>
<keyword id="KW-0732">Signal</keyword>